<name>LUXS_ECO8A</name>
<organism>
    <name type="scientific">Escherichia coli O8 (strain IAI1)</name>
    <dbReference type="NCBI Taxonomy" id="585034"/>
    <lineage>
        <taxon>Bacteria</taxon>
        <taxon>Pseudomonadati</taxon>
        <taxon>Pseudomonadota</taxon>
        <taxon>Gammaproteobacteria</taxon>
        <taxon>Enterobacterales</taxon>
        <taxon>Enterobacteriaceae</taxon>
        <taxon>Escherichia</taxon>
    </lineage>
</organism>
<comment type="function">
    <text evidence="1">Involved in the synthesis of autoinducer 2 (AI-2) which is secreted by bacteria and is used to communicate both the cell density and the metabolic potential of the environment. The regulation of gene expression in response to changes in cell density is called quorum sensing. Catalyzes the transformation of S-ribosylhomocysteine (RHC) to homocysteine (HC) and 4,5-dihydroxy-2,3-pentadione (DPD).</text>
</comment>
<comment type="catalytic activity">
    <reaction evidence="1">
        <text>S-(5-deoxy-D-ribos-5-yl)-L-homocysteine = (S)-4,5-dihydroxypentane-2,3-dione + L-homocysteine</text>
        <dbReference type="Rhea" id="RHEA:17753"/>
        <dbReference type="ChEBI" id="CHEBI:29484"/>
        <dbReference type="ChEBI" id="CHEBI:58195"/>
        <dbReference type="ChEBI" id="CHEBI:58199"/>
        <dbReference type="EC" id="4.4.1.21"/>
    </reaction>
</comment>
<comment type="cofactor">
    <cofactor evidence="1">
        <name>Fe cation</name>
        <dbReference type="ChEBI" id="CHEBI:24875"/>
    </cofactor>
    <text evidence="1">Binds 1 Fe cation per subunit.</text>
</comment>
<comment type="subunit">
    <text evidence="1">Homodimer.</text>
</comment>
<comment type="similarity">
    <text evidence="1">Belongs to the LuxS family.</text>
</comment>
<evidence type="ECO:0000255" key="1">
    <source>
        <dbReference type="HAMAP-Rule" id="MF_00091"/>
    </source>
</evidence>
<dbReference type="EC" id="4.4.1.21" evidence="1"/>
<dbReference type="EMBL" id="CU928160">
    <property type="protein sequence ID" value="CAQ99608.1"/>
    <property type="molecule type" value="Genomic_DNA"/>
</dbReference>
<dbReference type="RefSeq" id="WP_001130210.1">
    <property type="nucleotide sequence ID" value="NC_011741.1"/>
</dbReference>
<dbReference type="SMR" id="B7M9C9"/>
<dbReference type="KEGG" id="ecr:ECIAI1_2782"/>
<dbReference type="HOGENOM" id="CLU_107531_2_0_6"/>
<dbReference type="GO" id="GO:0005506">
    <property type="term" value="F:iron ion binding"/>
    <property type="evidence" value="ECO:0007669"/>
    <property type="project" value="InterPro"/>
</dbReference>
<dbReference type="GO" id="GO:0043768">
    <property type="term" value="F:S-ribosylhomocysteine lyase activity"/>
    <property type="evidence" value="ECO:0007669"/>
    <property type="project" value="UniProtKB-UniRule"/>
</dbReference>
<dbReference type="GO" id="GO:0009372">
    <property type="term" value="P:quorum sensing"/>
    <property type="evidence" value="ECO:0007669"/>
    <property type="project" value="UniProtKB-UniRule"/>
</dbReference>
<dbReference type="FunFam" id="3.30.1360.80:FF:000001">
    <property type="entry name" value="S-ribosylhomocysteine lyase"/>
    <property type="match status" value="1"/>
</dbReference>
<dbReference type="Gene3D" id="3.30.1360.80">
    <property type="entry name" value="S-ribosylhomocysteinase (LuxS)"/>
    <property type="match status" value="1"/>
</dbReference>
<dbReference type="HAMAP" id="MF_00091">
    <property type="entry name" value="LuxS"/>
    <property type="match status" value="1"/>
</dbReference>
<dbReference type="InterPro" id="IPR037005">
    <property type="entry name" value="LuxS_sf"/>
</dbReference>
<dbReference type="InterPro" id="IPR011249">
    <property type="entry name" value="Metalloenz_LuxS/M16"/>
</dbReference>
<dbReference type="InterPro" id="IPR003815">
    <property type="entry name" value="S-ribosylhomocysteinase"/>
</dbReference>
<dbReference type="NCBIfam" id="NF002602">
    <property type="entry name" value="PRK02260.1-2"/>
    <property type="match status" value="1"/>
</dbReference>
<dbReference type="PANTHER" id="PTHR35799">
    <property type="entry name" value="S-RIBOSYLHOMOCYSTEINE LYASE"/>
    <property type="match status" value="1"/>
</dbReference>
<dbReference type="PANTHER" id="PTHR35799:SF1">
    <property type="entry name" value="S-RIBOSYLHOMOCYSTEINE LYASE"/>
    <property type="match status" value="1"/>
</dbReference>
<dbReference type="Pfam" id="PF02664">
    <property type="entry name" value="LuxS"/>
    <property type="match status" value="1"/>
</dbReference>
<dbReference type="PIRSF" id="PIRSF006160">
    <property type="entry name" value="AI2"/>
    <property type="match status" value="1"/>
</dbReference>
<dbReference type="PRINTS" id="PR01487">
    <property type="entry name" value="LUXSPROTEIN"/>
</dbReference>
<dbReference type="SUPFAM" id="SSF63411">
    <property type="entry name" value="LuxS/MPP-like metallohydrolase"/>
    <property type="match status" value="1"/>
</dbReference>
<feature type="chain" id="PRO_1000117219" description="S-ribosylhomocysteine lyase">
    <location>
        <begin position="1"/>
        <end position="171"/>
    </location>
</feature>
<feature type="binding site" evidence="1">
    <location>
        <position position="54"/>
    </location>
    <ligand>
        <name>Fe cation</name>
        <dbReference type="ChEBI" id="CHEBI:24875"/>
    </ligand>
</feature>
<feature type="binding site" evidence="1">
    <location>
        <position position="58"/>
    </location>
    <ligand>
        <name>Fe cation</name>
        <dbReference type="ChEBI" id="CHEBI:24875"/>
    </ligand>
</feature>
<feature type="binding site" evidence="1">
    <location>
        <position position="128"/>
    </location>
    <ligand>
        <name>Fe cation</name>
        <dbReference type="ChEBI" id="CHEBI:24875"/>
    </ligand>
</feature>
<protein>
    <recommendedName>
        <fullName evidence="1">S-ribosylhomocysteine lyase</fullName>
        <ecNumber evidence="1">4.4.1.21</ecNumber>
    </recommendedName>
    <alternativeName>
        <fullName evidence="1">AI-2 synthesis protein</fullName>
    </alternativeName>
    <alternativeName>
        <fullName evidence="1">Autoinducer-2 production protein LuxS</fullName>
    </alternativeName>
</protein>
<keyword id="KW-0071">Autoinducer synthesis</keyword>
<keyword id="KW-0408">Iron</keyword>
<keyword id="KW-0456">Lyase</keyword>
<keyword id="KW-0479">Metal-binding</keyword>
<keyword id="KW-0673">Quorum sensing</keyword>
<gene>
    <name evidence="1" type="primary">luxS</name>
    <name type="ordered locus">ECIAI1_2782</name>
</gene>
<reference key="1">
    <citation type="journal article" date="2009" name="PLoS Genet.">
        <title>Organised genome dynamics in the Escherichia coli species results in highly diverse adaptive paths.</title>
        <authorList>
            <person name="Touchon M."/>
            <person name="Hoede C."/>
            <person name="Tenaillon O."/>
            <person name="Barbe V."/>
            <person name="Baeriswyl S."/>
            <person name="Bidet P."/>
            <person name="Bingen E."/>
            <person name="Bonacorsi S."/>
            <person name="Bouchier C."/>
            <person name="Bouvet O."/>
            <person name="Calteau A."/>
            <person name="Chiapello H."/>
            <person name="Clermont O."/>
            <person name="Cruveiller S."/>
            <person name="Danchin A."/>
            <person name="Diard M."/>
            <person name="Dossat C."/>
            <person name="Karoui M.E."/>
            <person name="Frapy E."/>
            <person name="Garry L."/>
            <person name="Ghigo J.M."/>
            <person name="Gilles A.M."/>
            <person name="Johnson J."/>
            <person name="Le Bouguenec C."/>
            <person name="Lescat M."/>
            <person name="Mangenot S."/>
            <person name="Martinez-Jehanne V."/>
            <person name="Matic I."/>
            <person name="Nassif X."/>
            <person name="Oztas S."/>
            <person name="Petit M.A."/>
            <person name="Pichon C."/>
            <person name="Rouy Z."/>
            <person name="Ruf C.S."/>
            <person name="Schneider D."/>
            <person name="Tourret J."/>
            <person name="Vacherie B."/>
            <person name="Vallenet D."/>
            <person name="Medigue C."/>
            <person name="Rocha E.P.C."/>
            <person name="Denamur E."/>
        </authorList>
    </citation>
    <scope>NUCLEOTIDE SEQUENCE [LARGE SCALE GENOMIC DNA]</scope>
    <source>
        <strain>IAI1</strain>
    </source>
</reference>
<sequence length="171" mass="19417">MPLLDSFTVDHTRMEAPAVRVAKTMNTPHGDAITVFDLRFCVPNKEVMPERGIHTLEHLFAGFMRNHLNGNGVEIIDISPMGCRTGFYMSLIGTPDEQRVADAWKAAMEDVLKVQDQNQIPELNVYQCGTYQMHSLQEAQDIARSILERDVRINSNEELALPEEKLQELHI</sequence>
<proteinExistence type="inferred from homology"/>
<accession>B7M9C9</accession>